<organism>
    <name type="scientific">Sphingopyxis alaskensis (strain DSM 13593 / LMG 18877 / RB2256)</name>
    <name type="common">Sphingomonas alaskensis</name>
    <dbReference type="NCBI Taxonomy" id="317655"/>
    <lineage>
        <taxon>Bacteria</taxon>
        <taxon>Pseudomonadati</taxon>
        <taxon>Pseudomonadota</taxon>
        <taxon>Alphaproteobacteria</taxon>
        <taxon>Sphingomonadales</taxon>
        <taxon>Sphingomonadaceae</taxon>
        <taxon>Sphingopyxis</taxon>
    </lineage>
</organism>
<reference key="1">
    <citation type="journal article" date="2009" name="Proc. Natl. Acad. Sci. U.S.A.">
        <title>The genomic basis of trophic strategy in marine bacteria.</title>
        <authorList>
            <person name="Lauro F.M."/>
            <person name="McDougald D."/>
            <person name="Thomas T."/>
            <person name="Williams T.J."/>
            <person name="Egan S."/>
            <person name="Rice S."/>
            <person name="DeMaere M.Z."/>
            <person name="Ting L."/>
            <person name="Ertan H."/>
            <person name="Johnson J."/>
            <person name="Ferriera S."/>
            <person name="Lapidus A."/>
            <person name="Anderson I."/>
            <person name="Kyrpides N."/>
            <person name="Munk A.C."/>
            <person name="Detter C."/>
            <person name="Han C.S."/>
            <person name="Brown M.V."/>
            <person name="Robb F.T."/>
            <person name="Kjelleberg S."/>
            <person name="Cavicchioli R."/>
        </authorList>
    </citation>
    <scope>NUCLEOTIDE SEQUENCE [LARGE SCALE GENOMIC DNA]</scope>
    <source>
        <strain>DSM 13593 / LMG 18877 / RB2256</strain>
    </source>
</reference>
<protein>
    <recommendedName>
        <fullName evidence="1">Recombination protein RecR</fullName>
    </recommendedName>
</protein>
<sequence length="198" mass="21373">MVSTEIEALVQQLARLPGLGPRSARRAVLHLMKKRESAFAPLLAALQTVSERLVTCTTCGNIDTHDPCAICADPRRDARSLCVVEEVSDLWALDKSRLFPGKYHVLGGRLSALEGVRPQDLSIDALVTRVAAGGIDEVVLAMNATLEGQTTAHYLAERLEGYPVRLTQLAHGLPVGGELDYLDEGTLAQALRARRPVG</sequence>
<name>RECR_SPHAL</name>
<accession>Q1GWJ9</accession>
<keyword id="KW-0227">DNA damage</keyword>
<keyword id="KW-0233">DNA recombination</keyword>
<keyword id="KW-0234">DNA repair</keyword>
<keyword id="KW-0479">Metal-binding</keyword>
<keyword id="KW-1185">Reference proteome</keyword>
<keyword id="KW-0862">Zinc</keyword>
<keyword id="KW-0863">Zinc-finger</keyword>
<dbReference type="EMBL" id="CP000356">
    <property type="protein sequence ID" value="ABF51973.1"/>
    <property type="molecule type" value="Genomic_DNA"/>
</dbReference>
<dbReference type="RefSeq" id="WP_011540565.1">
    <property type="nucleotide sequence ID" value="NC_008048.1"/>
</dbReference>
<dbReference type="SMR" id="Q1GWJ9"/>
<dbReference type="STRING" id="317655.Sala_0250"/>
<dbReference type="KEGG" id="sal:Sala_0250"/>
<dbReference type="eggNOG" id="COG0353">
    <property type="taxonomic scope" value="Bacteria"/>
</dbReference>
<dbReference type="HOGENOM" id="CLU_060739_1_1_5"/>
<dbReference type="OrthoDB" id="9802672at2"/>
<dbReference type="Proteomes" id="UP000006578">
    <property type="component" value="Chromosome"/>
</dbReference>
<dbReference type="GO" id="GO:0003677">
    <property type="term" value="F:DNA binding"/>
    <property type="evidence" value="ECO:0007669"/>
    <property type="project" value="UniProtKB-UniRule"/>
</dbReference>
<dbReference type="GO" id="GO:0008270">
    <property type="term" value="F:zinc ion binding"/>
    <property type="evidence" value="ECO:0007669"/>
    <property type="project" value="UniProtKB-KW"/>
</dbReference>
<dbReference type="GO" id="GO:0006310">
    <property type="term" value="P:DNA recombination"/>
    <property type="evidence" value="ECO:0007669"/>
    <property type="project" value="UniProtKB-UniRule"/>
</dbReference>
<dbReference type="GO" id="GO:0006281">
    <property type="term" value="P:DNA repair"/>
    <property type="evidence" value="ECO:0007669"/>
    <property type="project" value="UniProtKB-UniRule"/>
</dbReference>
<dbReference type="CDD" id="cd01025">
    <property type="entry name" value="TOPRIM_recR"/>
    <property type="match status" value="1"/>
</dbReference>
<dbReference type="Gene3D" id="3.40.1360.10">
    <property type="match status" value="1"/>
</dbReference>
<dbReference type="Gene3D" id="6.10.250.240">
    <property type="match status" value="1"/>
</dbReference>
<dbReference type="Gene3D" id="1.10.8.420">
    <property type="entry name" value="RecR Domain 1"/>
    <property type="match status" value="1"/>
</dbReference>
<dbReference type="HAMAP" id="MF_00017">
    <property type="entry name" value="RecR"/>
    <property type="match status" value="1"/>
</dbReference>
<dbReference type="InterPro" id="IPR000093">
    <property type="entry name" value="DNA_Rcmb_RecR"/>
</dbReference>
<dbReference type="InterPro" id="IPR023627">
    <property type="entry name" value="Rcmb_RecR"/>
</dbReference>
<dbReference type="InterPro" id="IPR015967">
    <property type="entry name" value="Rcmb_RecR_Znf"/>
</dbReference>
<dbReference type="InterPro" id="IPR006171">
    <property type="entry name" value="TOPRIM_dom"/>
</dbReference>
<dbReference type="InterPro" id="IPR034137">
    <property type="entry name" value="TOPRIM_RecR"/>
</dbReference>
<dbReference type="NCBIfam" id="TIGR00615">
    <property type="entry name" value="recR"/>
    <property type="match status" value="1"/>
</dbReference>
<dbReference type="PANTHER" id="PTHR30446">
    <property type="entry name" value="RECOMBINATION PROTEIN RECR"/>
    <property type="match status" value="1"/>
</dbReference>
<dbReference type="PANTHER" id="PTHR30446:SF0">
    <property type="entry name" value="RECOMBINATION PROTEIN RECR"/>
    <property type="match status" value="1"/>
</dbReference>
<dbReference type="Pfam" id="PF21175">
    <property type="entry name" value="RecR_C"/>
    <property type="match status" value="1"/>
</dbReference>
<dbReference type="Pfam" id="PF21176">
    <property type="entry name" value="RecR_HhH"/>
    <property type="match status" value="1"/>
</dbReference>
<dbReference type="Pfam" id="PF02132">
    <property type="entry name" value="RecR_ZnF"/>
    <property type="match status" value="1"/>
</dbReference>
<dbReference type="Pfam" id="PF13662">
    <property type="entry name" value="Toprim_4"/>
    <property type="match status" value="1"/>
</dbReference>
<dbReference type="SMART" id="SM00493">
    <property type="entry name" value="TOPRIM"/>
    <property type="match status" value="1"/>
</dbReference>
<dbReference type="SUPFAM" id="SSF111304">
    <property type="entry name" value="Recombination protein RecR"/>
    <property type="match status" value="1"/>
</dbReference>
<dbReference type="PROSITE" id="PS01300">
    <property type="entry name" value="RECR"/>
    <property type="match status" value="1"/>
</dbReference>
<dbReference type="PROSITE" id="PS50880">
    <property type="entry name" value="TOPRIM"/>
    <property type="match status" value="1"/>
</dbReference>
<comment type="function">
    <text evidence="1">May play a role in DNA repair. It seems to be involved in an RecBC-independent recombinational process of DNA repair. It may act with RecF and RecO.</text>
</comment>
<comment type="similarity">
    <text evidence="1">Belongs to the RecR family.</text>
</comment>
<gene>
    <name evidence="1" type="primary">recR</name>
    <name type="ordered locus">Sala_0250</name>
</gene>
<feature type="chain" id="PRO_0000322955" description="Recombination protein RecR">
    <location>
        <begin position="1"/>
        <end position="198"/>
    </location>
</feature>
<feature type="domain" description="Toprim" evidence="1">
    <location>
        <begin position="79"/>
        <end position="174"/>
    </location>
</feature>
<feature type="zinc finger region" description="C4-type" evidence="1">
    <location>
        <begin position="56"/>
        <end position="71"/>
    </location>
</feature>
<proteinExistence type="inferred from homology"/>
<evidence type="ECO:0000255" key="1">
    <source>
        <dbReference type="HAMAP-Rule" id="MF_00017"/>
    </source>
</evidence>